<name>LEU1_RHOPB</name>
<feature type="chain" id="PRO_1000149259" description="2-isopropylmalate synthase">
    <location>
        <begin position="1"/>
        <end position="521"/>
    </location>
</feature>
<feature type="domain" description="Pyruvate carboxyltransferase" evidence="1">
    <location>
        <begin position="12"/>
        <end position="274"/>
    </location>
</feature>
<feature type="region of interest" description="Regulatory domain" evidence="1">
    <location>
        <begin position="398"/>
        <end position="521"/>
    </location>
</feature>
<feature type="binding site" evidence="1">
    <location>
        <position position="21"/>
    </location>
    <ligand>
        <name>Mn(2+)</name>
        <dbReference type="ChEBI" id="CHEBI:29035"/>
    </ligand>
</feature>
<feature type="binding site" evidence="1">
    <location>
        <position position="209"/>
    </location>
    <ligand>
        <name>Mn(2+)</name>
        <dbReference type="ChEBI" id="CHEBI:29035"/>
    </ligand>
</feature>
<feature type="binding site" evidence="1">
    <location>
        <position position="211"/>
    </location>
    <ligand>
        <name>Mn(2+)</name>
        <dbReference type="ChEBI" id="CHEBI:29035"/>
    </ligand>
</feature>
<feature type="binding site" evidence="1">
    <location>
        <position position="245"/>
    </location>
    <ligand>
        <name>Mn(2+)</name>
        <dbReference type="ChEBI" id="CHEBI:29035"/>
    </ligand>
</feature>
<organism>
    <name type="scientific">Rhodopseudomonas palustris (strain BisB18)</name>
    <dbReference type="NCBI Taxonomy" id="316056"/>
    <lineage>
        <taxon>Bacteria</taxon>
        <taxon>Pseudomonadati</taxon>
        <taxon>Pseudomonadota</taxon>
        <taxon>Alphaproteobacteria</taxon>
        <taxon>Hyphomicrobiales</taxon>
        <taxon>Nitrobacteraceae</taxon>
        <taxon>Rhodopseudomonas</taxon>
    </lineage>
</organism>
<dbReference type="EC" id="2.3.3.13" evidence="1"/>
<dbReference type="EMBL" id="CP000301">
    <property type="protein sequence ID" value="ABD88777.1"/>
    <property type="molecule type" value="Genomic_DNA"/>
</dbReference>
<dbReference type="SMR" id="Q212A9"/>
<dbReference type="STRING" id="316056.RPC_3235"/>
<dbReference type="KEGG" id="rpc:RPC_3235"/>
<dbReference type="eggNOG" id="COG0119">
    <property type="taxonomic scope" value="Bacteria"/>
</dbReference>
<dbReference type="HOGENOM" id="CLU_022158_0_1_5"/>
<dbReference type="OrthoDB" id="9803573at2"/>
<dbReference type="UniPathway" id="UPA00048">
    <property type="reaction ID" value="UER00070"/>
</dbReference>
<dbReference type="GO" id="GO:0005829">
    <property type="term" value="C:cytosol"/>
    <property type="evidence" value="ECO:0007669"/>
    <property type="project" value="TreeGrafter"/>
</dbReference>
<dbReference type="GO" id="GO:0003852">
    <property type="term" value="F:2-isopropylmalate synthase activity"/>
    <property type="evidence" value="ECO:0007669"/>
    <property type="project" value="UniProtKB-UniRule"/>
</dbReference>
<dbReference type="GO" id="GO:0003985">
    <property type="term" value="F:acetyl-CoA C-acetyltransferase activity"/>
    <property type="evidence" value="ECO:0007669"/>
    <property type="project" value="UniProtKB-UniRule"/>
</dbReference>
<dbReference type="GO" id="GO:0030145">
    <property type="term" value="F:manganese ion binding"/>
    <property type="evidence" value="ECO:0007669"/>
    <property type="project" value="UniProtKB-UniRule"/>
</dbReference>
<dbReference type="GO" id="GO:0009098">
    <property type="term" value="P:L-leucine biosynthetic process"/>
    <property type="evidence" value="ECO:0007669"/>
    <property type="project" value="UniProtKB-UniRule"/>
</dbReference>
<dbReference type="CDD" id="cd07940">
    <property type="entry name" value="DRE_TIM_IPMS"/>
    <property type="match status" value="1"/>
</dbReference>
<dbReference type="FunFam" id="1.10.238.260:FF:000001">
    <property type="entry name" value="2-isopropylmalate synthase"/>
    <property type="match status" value="1"/>
</dbReference>
<dbReference type="FunFam" id="3.20.20.70:FF:000010">
    <property type="entry name" value="2-isopropylmalate synthase"/>
    <property type="match status" value="1"/>
</dbReference>
<dbReference type="FunFam" id="3.30.160.270:FF:000003">
    <property type="entry name" value="2-isopropylmalate synthase"/>
    <property type="match status" value="1"/>
</dbReference>
<dbReference type="Gene3D" id="1.10.238.260">
    <property type="match status" value="1"/>
</dbReference>
<dbReference type="Gene3D" id="3.30.160.270">
    <property type="match status" value="1"/>
</dbReference>
<dbReference type="Gene3D" id="3.20.20.70">
    <property type="entry name" value="Aldolase class I"/>
    <property type="match status" value="1"/>
</dbReference>
<dbReference type="HAMAP" id="MF_01025">
    <property type="entry name" value="LeuA_type1"/>
    <property type="match status" value="1"/>
</dbReference>
<dbReference type="InterPro" id="IPR050073">
    <property type="entry name" value="2-IPM_HCS-like"/>
</dbReference>
<dbReference type="InterPro" id="IPR013709">
    <property type="entry name" value="2-isopropylmalate_synth_dimer"/>
</dbReference>
<dbReference type="InterPro" id="IPR002034">
    <property type="entry name" value="AIPM/Hcit_synth_CS"/>
</dbReference>
<dbReference type="InterPro" id="IPR013785">
    <property type="entry name" value="Aldolase_TIM"/>
</dbReference>
<dbReference type="InterPro" id="IPR054691">
    <property type="entry name" value="LeuA/HCS_post-cat"/>
</dbReference>
<dbReference type="InterPro" id="IPR036230">
    <property type="entry name" value="LeuA_allosteric_dom_sf"/>
</dbReference>
<dbReference type="InterPro" id="IPR005671">
    <property type="entry name" value="LeuA_bact_synth"/>
</dbReference>
<dbReference type="InterPro" id="IPR000891">
    <property type="entry name" value="PYR_CT"/>
</dbReference>
<dbReference type="NCBIfam" id="TIGR00973">
    <property type="entry name" value="leuA_bact"/>
    <property type="match status" value="1"/>
</dbReference>
<dbReference type="NCBIfam" id="NF002086">
    <property type="entry name" value="PRK00915.1-3"/>
    <property type="match status" value="1"/>
</dbReference>
<dbReference type="NCBIfam" id="NF002087">
    <property type="entry name" value="PRK00915.1-4"/>
    <property type="match status" value="1"/>
</dbReference>
<dbReference type="PANTHER" id="PTHR10277:SF9">
    <property type="entry name" value="2-ISOPROPYLMALATE SYNTHASE 1, CHLOROPLASTIC-RELATED"/>
    <property type="match status" value="1"/>
</dbReference>
<dbReference type="PANTHER" id="PTHR10277">
    <property type="entry name" value="HOMOCITRATE SYNTHASE-RELATED"/>
    <property type="match status" value="1"/>
</dbReference>
<dbReference type="Pfam" id="PF22617">
    <property type="entry name" value="HCS_D2"/>
    <property type="match status" value="1"/>
</dbReference>
<dbReference type="Pfam" id="PF00682">
    <property type="entry name" value="HMGL-like"/>
    <property type="match status" value="1"/>
</dbReference>
<dbReference type="Pfam" id="PF08502">
    <property type="entry name" value="LeuA_dimer"/>
    <property type="match status" value="1"/>
</dbReference>
<dbReference type="SMART" id="SM00917">
    <property type="entry name" value="LeuA_dimer"/>
    <property type="match status" value="1"/>
</dbReference>
<dbReference type="SUPFAM" id="SSF110921">
    <property type="entry name" value="2-isopropylmalate synthase LeuA, allosteric (dimerisation) domain"/>
    <property type="match status" value="1"/>
</dbReference>
<dbReference type="SUPFAM" id="SSF51569">
    <property type="entry name" value="Aldolase"/>
    <property type="match status" value="1"/>
</dbReference>
<dbReference type="PROSITE" id="PS00815">
    <property type="entry name" value="AIPM_HOMOCIT_SYNTH_1"/>
    <property type="match status" value="1"/>
</dbReference>
<dbReference type="PROSITE" id="PS00816">
    <property type="entry name" value="AIPM_HOMOCIT_SYNTH_2"/>
    <property type="match status" value="1"/>
</dbReference>
<dbReference type="PROSITE" id="PS50991">
    <property type="entry name" value="PYR_CT"/>
    <property type="match status" value="1"/>
</dbReference>
<accession>Q212A9</accession>
<sequence>MTATTPSDKDRVIIFDTTLRDGEQCPGATMTFEEKLEVASLLDAMGVDVIEAGFPIASDGDFAAVHEIAKRAKNAVICGLSRAGAKDIDRCAEAIRPAKQGRIHTFLSTSPVHMKYKLQMDAEQVYQLVISAVTRARNHTDNVEWSSEDGTRTEFDFLCKCVEAAIKAGATTINIPDTVGYSVPEEYFDLFKRVRENVPNSDKAIFSVHCHDDLGMAVANSLAGIRGGARQIECTVNGIGERAGNTALEEVVMAMRVRNDKLPFWNKIDTTMLTRASKVVSAATSFPVQYNKAIVGRNAFAHESGIHQDGMLKNAETYEIMRPESVGVKQTSLVMGKHSGRHAFVHKLEEMGYKLGQNQLEDAFVRFKALADRKKEIYDEDIEALVDQEIAQSHDRIKLLSLTVIAGTHGPQRATMKLDVEGQTRIEEAEGNGPVDAVFNCIKALVPHVAKLELYQVHAVTQGTDAQAEVSVRLAHEGRSMTARAADPDTLVASAKAYLSALNKIVMKRERDLPVPEAAAS</sequence>
<protein>
    <recommendedName>
        <fullName evidence="1">2-isopropylmalate synthase</fullName>
        <ecNumber evidence="1">2.3.3.13</ecNumber>
    </recommendedName>
    <alternativeName>
        <fullName evidence="1">Alpha-IPM synthase</fullName>
    </alternativeName>
    <alternativeName>
        <fullName evidence="1">Alpha-isopropylmalate synthase</fullName>
    </alternativeName>
</protein>
<gene>
    <name evidence="1" type="primary">leuA</name>
    <name type="ordered locus">RPC_3235</name>
</gene>
<evidence type="ECO:0000255" key="1">
    <source>
        <dbReference type="HAMAP-Rule" id="MF_01025"/>
    </source>
</evidence>
<keyword id="KW-0028">Amino-acid biosynthesis</keyword>
<keyword id="KW-0100">Branched-chain amino acid biosynthesis</keyword>
<keyword id="KW-0963">Cytoplasm</keyword>
<keyword id="KW-0432">Leucine biosynthesis</keyword>
<keyword id="KW-0464">Manganese</keyword>
<keyword id="KW-0479">Metal-binding</keyword>
<keyword id="KW-0808">Transferase</keyword>
<comment type="function">
    <text evidence="1">Catalyzes the condensation of the acetyl group of acetyl-CoA with 3-methyl-2-oxobutanoate (2-ketoisovalerate) to form 3-carboxy-3-hydroxy-4-methylpentanoate (2-isopropylmalate).</text>
</comment>
<comment type="catalytic activity">
    <reaction evidence="1">
        <text>3-methyl-2-oxobutanoate + acetyl-CoA + H2O = (2S)-2-isopropylmalate + CoA + H(+)</text>
        <dbReference type="Rhea" id="RHEA:21524"/>
        <dbReference type="ChEBI" id="CHEBI:1178"/>
        <dbReference type="ChEBI" id="CHEBI:11851"/>
        <dbReference type="ChEBI" id="CHEBI:15377"/>
        <dbReference type="ChEBI" id="CHEBI:15378"/>
        <dbReference type="ChEBI" id="CHEBI:57287"/>
        <dbReference type="ChEBI" id="CHEBI:57288"/>
        <dbReference type="EC" id="2.3.3.13"/>
    </reaction>
</comment>
<comment type="cofactor">
    <cofactor evidence="1">
        <name>Mn(2+)</name>
        <dbReference type="ChEBI" id="CHEBI:29035"/>
    </cofactor>
</comment>
<comment type="pathway">
    <text evidence="1">Amino-acid biosynthesis; L-leucine biosynthesis; L-leucine from 3-methyl-2-oxobutanoate: step 1/4.</text>
</comment>
<comment type="subunit">
    <text evidence="1">Homodimer.</text>
</comment>
<comment type="subcellular location">
    <subcellularLocation>
        <location evidence="1">Cytoplasm</location>
    </subcellularLocation>
</comment>
<comment type="similarity">
    <text evidence="1">Belongs to the alpha-IPM synthase/homocitrate synthase family. LeuA type 1 subfamily.</text>
</comment>
<reference key="1">
    <citation type="submission" date="2006-03" db="EMBL/GenBank/DDBJ databases">
        <title>Complete sequence of Rhodopseudomonas palustris BisB18.</title>
        <authorList>
            <consortium name="US DOE Joint Genome Institute"/>
            <person name="Copeland A."/>
            <person name="Lucas S."/>
            <person name="Lapidus A."/>
            <person name="Barry K."/>
            <person name="Detter J.C."/>
            <person name="Glavina del Rio T."/>
            <person name="Hammon N."/>
            <person name="Israni S."/>
            <person name="Dalin E."/>
            <person name="Tice H."/>
            <person name="Pitluck S."/>
            <person name="Chain P."/>
            <person name="Malfatti S."/>
            <person name="Shin M."/>
            <person name="Vergez L."/>
            <person name="Schmutz J."/>
            <person name="Larimer F."/>
            <person name="Land M."/>
            <person name="Hauser L."/>
            <person name="Pelletier D.A."/>
            <person name="Kyrpides N."/>
            <person name="Anderson I."/>
            <person name="Oda Y."/>
            <person name="Harwood C.S."/>
            <person name="Richardson P."/>
        </authorList>
    </citation>
    <scope>NUCLEOTIDE SEQUENCE [LARGE SCALE GENOMIC DNA]</scope>
    <source>
        <strain>BisB18</strain>
    </source>
</reference>
<proteinExistence type="inferred from homology"/>